<keyword id="KW-0342">GTP-binding</keyword>
<keyword id="KW-0547">Nucleotide-binding</keyword>
<keyword id="KW-0548">Nucleotidyltransferase</keyword>
<keyword id="KW-1185">Reference proteome</keyword>
<keyword id="KW-0808">Transferase</keyword>
<organism>
    <name type="scientific">Halorubrum lacusprofundi (strain ATCC 49239 / DSM 5036 / JCM 8891 / ACAM 34)</name>
    <dbReference type="NCBI Taxonomy" id="416348"/>
    <lineage>
        <taxon>Archaea</taxon>
        <taxon>Methanobacteriati</taxon>
        <taxon>Methanobacteriota</taxon>
        <taxon>Stenosarchaea group</taxon>
        <taxon>Halobacteria</taxon>
        <taxon>Halobacteriales</taxon>
        <taxon>Haloferacaceae</taxon>
        <taxon>Halorubrum</taxon>
    </lineage>
</organism>
<gene>
    <name evidence="1" type="primary">cofC</name>
    <name type="ordered locus">Hlac_1893</name>
</gene>
<sequence>MEVIVPFSTERPKSRLSAVLTPDERAAFARTMLQDVLAAIDAADGEPRILATGAVGIDLPSPVEIDDRPLTDAVNAAIDARLGNDGAERVAVVMADLALATPNALRELFAAGREAEVAIAPGRGGGTNAFVAGHPAFRVDYHGASYLDHRRIADEIGAGVRVVDSHRLATDVDEPADLAELLIHAEADGDGGRAARWLRDAGFALDTTDGRVGVRRE</sequence>
<evidence type="ECO:0000255" key="1">
    <source>
        <dbReference type="HAMAP-Rule" id="MF_02114"/>
    </source>
</evidence>
<reference key="1">
    <citation type="journal article" date="2016" name="Stand. Genomic Sci.">
        <title>Complete genome sequence of the Antarctic Halorubrum lacusprofundi type strain ACAM 34.</title>
        <authorList>
            <person name="Anderson I.J."/>
            <person name="DasSarma P."/>
            <person name="Lucas S."/>
            <person name="Copeland A."/>
            <person name="Lapidus A."/>
            <person name="Del Rio T.G."/>
            <person name="Tice H."/>
            <person name="Dalin E."/>
            <person name="Bruce D.C."/>
            <person name="Goodwin L."/>
            <person name="Pitluck S."/>
            <person name="Sims D."/>
            <person name="Brettin T.S."/>
            <person name="Detter J.C."/>
            <person name="Han C.S."/>
            <person name="Larimer F."/>
            <person name="Hauser L."/>
            <person name="Land M."/>
            <person name="Ivanova N."/>
            <person name="Richardson P."/>
            <person name="Cavicchioli R."/>
            <person name="DasSarma S."/>
            <person name="Woese C.R."/>
            <person name="Kyrpides N.C."/>
        </authorList>
    </citation>
    <scope>NUCLEOTIDE SEQUENCE [LARGE SCALE GENOMIC DNA]</scope>
    <source>
        <strain>ATCC 49239 / DSM 5036 / JCM 8891 / ACAM 34</strain>
    </source>
</reference>
<comment type="function">
    <text evidence="1">Guanylyltransferase that catalyzes the activation of (2S)-2-phospholactate (2-PL) as (2S)-lactyl-2-diphospho-5'-guanosine, via the condensation of 2-PL with GTP. It is involved in the biosynthesis of coenzyme F420, a hydride carrier cofactor.</text>
</comment>
<comment type="catalytic activity">
    <reaction evidence="1">
        <text>(2S)-2-phospholactate + GTP + H(+) = (2S)-lactyl-2-diphospho-5'-guanosine + diphosphate</text>
        <dbReference type="Rhea" id="RHEA:63424"/>
        <dbReference type="ChEBI" id="CHEBI:15378"/>
        <dbReference type="ChEBI" id="CHEBI:33019"/>
        <dbReference type="ChEBI" id="CHEBI:37565"/>
        <dbReference type="ChEBI" id="CHEBI:59435"/>
        <dbReference type="ChEBI" id="CHEBI:59906"/>
        <dbReference type="EC" id="2.7.7.68"/>
    </reaction>
</comment>
<comment type="pathway">
    <text evidence="1">Cofactor biosynthesis; coenzyme F420 biosynthesis.</text>
</comment>
<comment type="subunit">
    <text evidence="1">Homodimer.</text>
</comment>
<comment type="similarity">
    <text evidence="1">Belongs to the CofC family.</text>
</comment>
<feature type="chain" id="PRO_0000398732" description="2-phospho-L-lactate guanylyltransferase">
    <location>
        <begin position="1"/>
        <end position="217"/>
    </location>
</feature>
<dbReference type="EC" id="2.7.7.68" evidence="1"/>
<dbReference type="EMBL" id="CP001365">
    <property type="protein sequence ID" value="ACM57471.1"/>
    <property type="molecule type" value="Genomic_DNA"/>
</dbReference>
<dbReference type="RefSeq" id="WP_015910596.1">
    <property type="nucleotide sequence ID" value="NC_012029.1"/>
</dbReference>
<dbReference type="SMR" id="B9LQ33"/>
<dbReference type="GeneID" id="7400087"/>
<dbReference type="KEGG" id="hla:Hlac_1893"/>
<dbReference type="eggNOG" id="arCOG04472">
    <property type="taxonomic scope" value="Archaea"/>
</dbReference>
<dbReference type="HOGENOM" id="CLU_076569_2_0_2"/>
<dbReference type="UniPathway" id="UPA00071"/>
<dbReference type="Proteomes" id="UP000000740">
    <property type="component" value="Chromosome 1"/>
</dbReference>
<dbReference type="GO" id="GO:0005525">
    <property type="term" value="F:GTP binding"/>
    <property type="evidence" value="ECO:0007669"/>
    <property type="project" value="UniProtKB-KW"/>
</dbReference>
<dbReference type="GO" id="GO:0043814">
    <property type="term" value="F:phospholactate guanylyltransferase activity"/>
    <property type="evidence" value="ECO:0007669"/>
    <property type="project" value="UniProtKB-EC"/>
</dbReference>
<dbReference type="GO" id="GO:0052645">
    <property type="term" value="P:F420-0 metabolic process"/>
    <property type="evidence" value="ECO:0007669"/>
    <property type="project" value="UniProtKB-UniRule"/>
</dbReference>
<dbReference type="Gene3D" id="6.10.140.50">
    <property type="match status" value="1"/>
</dbReference>
<dbReference type="Gene3D" id="3.90.550.10">
    <property type="entry name" value="Spore Coat Polysaccharide Biosynthesis Protein SpsA, Chain A"/>
    <property type="match status" value="1"/>
</dbReference>
<dbReference type="HAMAP" id="MF_02114">
    <property type="entry name" value="CofC"/>
    <property type="match status" value="1"/>
</dbReference>
<dbReference type="InterPro" id="IPR002835">
    <property type="entry name" value="CofC"/>
</dbReference>
<dbReference type="InterPro" id="IPR029044">
    <property type="entry name" value="Nucleotide-diphossugar_trans"/>
</dbReference>
<dbReference type="NCBIfam" id="TIGR03552">
    <property type="entry name" value="F420_cofC"/>
    <property type="match status" value="1"/>
</dbReference>
<dbReference type="PANTHER" id="PTHR40392">
    <property type="entry name" value="2-PHOSPHO-L-LACTATE GUANYLYLTRANSFERASE"/>
    <property type="match status" value="1"/>
</dbReference>
<dbReference type="PANTHER" id="PTHR40392:SF1">
    <property type="entry name" value="2-PHOSPHO-L-LACTATE GUANYLYLTRANSFERASE"/>
    <property type="match status" value="1"/>
</dbReference>
<dbReference type="Pfam" id="PF01983">
    <property type="entry name" value="CofC"/>
    <property type="match status" value="1"/>
</dbReference>
<dbReference type="SUPFAM" id="SSF53448">
    <property type="entry name" value="Nucleotide-diphospho-sugar transferases"/>
    <property type="match status" value="1"/>
</dbReference>
<protein>
    <recommendedName>
        <fullName evidence="1">2-phospho-L-lactate guanylyltransferase</fullName>
        <shortName evidence="1">LP guanylyltransferase</shortName>
        <ecNumber evidence="1">2.7.7.68</ecNumber>
    </recommendedName>
</protein>
<accession>B9LQ33</accession>
<name>COFC_HALLT</name>
<proteinExistence type="inferred from homology"/>